<dbReference type="EC" id="4.1.99.22" evidence="1"/>
<dbReference type="EMBL" id="CP000680">
    <property type="protein sequence ID" value="ABP85521.1"/>
    <property type="molecule type" value="Genomic_DNA"/>
</dbReference>
<dbReference type="SMR" id="A4XW05"/>
<dbReference type="STRING" id="399739.Pmen_2766"/>
<dbReference type="KEGG" id="pmy:Pmen_2766"/>
<dbReference type="PATRIC" id="fig|399739.8.peg.2799"/>
<dbReference type="eggNOG" id="COG2896">
    <property type="taxonomic scope" value="Bacteria"/>
</dbReference>
<dbReference type="HOGENOM" id="CLU_009273_0_1_6"/>
<dbReference type="OrthoDB" id="9763993at2"/>
<dbReference type="UniPathway" id="UPA00344"/>
<dbReference type="GO" id="GO:0051539">
    <property type="term" value="F:4 iron, 4 sulfur cluster binding"/>
    <property type="evidence" value="ECO:0007669"/>
    <property type="project" value="UniProtKB-UniRule"/>
</dbReference>
<dbReference type="GO" id="GO:0061799">
    <property type="term" value="F:cyclic pyranopterin monophosphate synthase activity"/>
    <property type="evidence" value="ECO:0007669"/>
    <property type="project" value="TreeGrafter"/>
</dbReference>
<dbReference type="GO" id="GO:0061798">
    <property type="term" value="F:GTP 3',8'-cyclase activity"/>
    <property type="evidence" value="ECO:0007669"/>
    <property type="project" value="UniProtKB-UniRule"/>
</dbReference>
<dbReference type="GO" id="GO:0005525">
    <property type="term" value="F:GTP binding"/>
    <property type="evidence" value="ECO:0007669"/>
    <property type="project" value="UniProtKB-UniRule"/>
</dbReference>
<dbReference type="GO" id="GO:0046872">
    <property type="term" value="F:metal ion binding"/>
    <property type="evidence" value="ECO:0007669"/>
    <property type="project" value="UniProtKB-KW"/>
</dbReference>
<dbReference type="GO" id="GO:1904047">
    <property type="term" value="F:S-adenosyl-L-methionine binding"/>
    <property type="evidence" value="ECO:0007669"/>
    <property type="project" value="UniProtKB-UniRule"/>
</dbReference>
<dbReference type="GO" id="GO:0006777">
    <property type="term" value="P:Mo-molybdopterin cofactor biosynthetic process"/>
    <property type="evidence" value="ECO:0007669"/>
    <property type="project" value="UniProtKB-UniRule"/>
</dbReference>
<dbReference type="CDD" id="cd01335">
    <property type="entry name" value="Radical_SAM"/>
    <property type="match status" value="1"/>
</dbReference>
<dbReference type="CDD" id="cd21117">
    <property type="entry name" value="Twitch_MoaA"/>
    <property type="match status" value="1"/>
</dbReference>
<dbReference type="Gene3D" id="3.20.20.70">
    <property type="entry name" value="Aldolase class I"/>
    <property type="match status" value="1"/>
</dbReference>
<dbReference type="HAMAP" id="MF_01225_B">
    <property type="entry name" value="MoaA_B"/>
    <property type="match status" value="1"/>
</dbReference>
<dbReference type="InterPro" id="IPR013785">
    <property type="entry name" value="Aldolase_TIM"/>
</dbReference>
<dbReference type="InterPro" id="IPR006638">
    <property type="entry name" value="Elp3/MiaA/NifB-like_rSAM"/>
</dbReference>
<dbReference type="InterPro" id="IPR013483">
    <property type="entry name" value="MoaA"/>
</dbReference>
<dbReference type="InterPro" id="IPR000385">
    <property type="entry name" value="MoaA_NifB_PqqE_Fe-S-bd_CS"/>
</dbReference>
<dbReference type="InterPro" id="IPR010505">
    <property type="entry name" value="MoaA_twitch"/>
</dbReference>
<dbReference type="InterPro" id="IPR050105">
    <property type="entry name" value="MoCo_biosynth_MoaA/MoaC"/>
</dbReference>
<dbReference type="InterPro" id="IPR007197">
    <property type="entry name" value="rSAM"/>
</dbReference>
<dbReference type="NCBIfam" id="TIGR02666">
    <property type="entry name" value="moaA"/>
    <property type="match status" value="1"/>
</dbReference>
<dbReference type="PANTHER" id="PTHR22960:SF0">
    <property type="entry name" value="MOLYBDENUM COFACTOR BIOSYNTHESIS PROTEIN 1"/>
    <property type="match status" value="1"/>
</dbReference>
<dbReference type="PANTHER" id="PTHR22960">
    <property type="entry name" value="MOLYBDOPTERIN COFACTOR SYNTHESIS PROTEIN A"/>
    <property type="match status" value="1"/>
</dbReference>
<dbReference type="Pfam" id="PF13353">
    <property type="entry name" value="Fer4_12"/>
    <property type="match status" value="1"/>
</dbReference>
<dbReference type="Pfam" id="PF06463">
    <property type="entry name" value="Mob_synth_C"/>
    <property type="match status" value="1"/>
</dbReference>
<dbReference type="Pfam" id="PF04055">
    <property type="entry name" value="Radical_SAM"/>
    <property type="match status" value="1"/>
</dbReference>
<dbReference type="SFLD" id="SFLDG01383">
    <property type="entry name" value="cyclic_pyranopterin_phosphate"/>
    <property type="match status" value="1"/>
</dbReference>
<dbReference type="SFLD" id="SFLDG01386">
    <property type="entry name" value="main_SPASM_domain-containing"/>
    <property type="match status" value="1"/>
</dbReference>
<dbReference type="SMART" id="SM00729">
    <property type="entry name" value="Elp3"/>
    <property type="match status" value="1"/>
</dbReference>
<dbReference type="SUPFAM" id="SSF102114">
    <property type="entry name" value="Radical SAM enzymes"/>
    <property type="match status" value="1"/>
</dbReference>
<dbReference type="PROSITE" id="PS01305">
    <property type="entry name" value="MOAA_NIFB_PQQE"/>
    <property type="match status" value="1"/>
</dbReference>
<dbReference type="PROSITE" id="PS51918">
    <property type="entry name" value="RADICAL_SAM"/>
    <property type="match status" value="1"/>
</dbReference>
<evidence type="ECO:0000255" key="1">
    <source>
        <dbReference type="HAMAP-Rule" id="MF_01225"/>
    </source>
</evidence>
<evidence type="ECO:0000255" key="2">
    <source>
        <dbReference type="PROSITE-ProRule" id="PRU01266"/>
    </source>
</evidence>
<name>MOAA_ECTM1</name>
<organism>
    <name type="scientific">Ectopseudomonas mendocina (strain ymp)</name>
    <name type="common">Pseudomonas mendocina</name>
    <dbReference type="NCBI Taxonomy" id="399739"/>
    <lineage>
        <taxon>Bacteria</taxon>
        <taxon>Pseudomonadati</taxon>
        <taxon>Pseudomonadota</taxon>
        <taxon>Gammaproteobacteria</taxon>
        <taxon>Pseudomonadales</taxon>
        <taxon>Pseudomonadaceae</taxon>
        <taxon>Ectopseudomonas</taxon>
    </lineage>
</organism>
<protein>
    <recommendedName>
        <fullName evidence="1">GTP 3',8-cyclase</fullName>
        <ecNumber evidence="1">4.1.99.22</ecNumber>
    </recommendedName>
    <alternativeName>
        <fullName evidence="1">Molybdenum cofactor biosynthesis protein A</fullName>
    </alternativeName>
</protein>
<feature type="chain" id="PRO_1000054213" description="GTP 3',8-cyclase">
    <location>
        <begin position="1"/>
        <end position="331"/>
    </location>
</feature>
<feature type="domain" description="Radical SAM core" evidence="2">
    <location>
        <begin position="9"/>
        <end position="233"/>
    </location>
</feature>
<feature type="binding site" evidence="1">
    <location>
        <position position="18"/>
    </location>
    <ligand>
        <name>GTP</name>
        <dbReference type="ChEBI" id="CHEBI:37565"/>
    </ligand>
</feature>
<feature type="binding site" evidence="1">
    <location>
        <position position="25"/>
    </location>
    <ligand>
        <name>[4Fe-4S] cluster</name>
        <dbReference type="ChEBI" id="CHEBI:49883"/>
        <label>1</label>
        <note>4Fe-4S-S-AdoMet</note>
    </ligand>
</feature>
<feature type="binding site" evidence="1">
    <location>
        <position position="29"/>
    </location>
    <ligand>
        <name>[4Fe-4S] cluster</name>
        <dbReference type="ChEBI" id="CHEBI:49883"/>
        <label>1</label>
        <note>4Fe-4S-S-AdoMet</note>
    </ligand>
</feature>
<feature type="binding site" evidence="1">
    <location>
        <position position="31"/>
    </location>
    <ligand>
        <name>S-adenosyl-L-methionine</name>
        <dbReference type="ChEBI" id="CHEBI:59789"/>
    </ligand>
</feature>
<feature type="binding site" evidence="1">
    <location>
        <position position="32"/>
    </location>
    <ligand>
        <name>[4Fe-4S] cluster</name>
        <dbReference type="ChEBI" id="CHEBI:49883"/>
        <label>1</label>
        <note>4Fe-4S-S-AdoMet</note>
    </ligand>
</feature>
<feature type="binding site" evidence="1">
    <location>
        <position position="67"/>
    </location>
    <ligand>
        <name>GTP</name>
        <dbReference type="ChEBI" id="CHEBI:37565"/>
    </ligand>
</feature>
<feature type="binding site" evidence="1">
    <location>
        <position position="71"/>
    </location>
    <ligand>
        <name>S-adenosyl-L-methionine</name>
        <dbReference type="ChEBI" id="CHEBI:59789"/>
    </ligand>
</feature>
<feature type="binding site" evidence="1">
    <location>
        <position position="98"/>
    </location>
    <ligand>
        <name>GTP</name>
        <dbReference type="ChEBI" id="CHEBI:37565"/>
    </ligand>
</feature>
<feature type="binding site" evidence="1">
    <location>
        <position position="122"/>
    </location>
    <ligand>
        <name>S-adenosyl-L-methionine</name>
        <dbReference type="ChEBI" id="CHEBI:59789"/>
    </ligand>
</feature>
<feature type="binding site" evidence="1">
    <location>
        <position position="159"/>
    </location>
    <ligand>
        <name>GTP</name>
        <dbReference type="ChEBI" id="CHEBI:37565"/>
    </ligand>
</feature>
<feature type="binding site" evidence="1">
    <location>
        <position position="193"/>
    </location>
    <ligand>
        <name>S-adenosyl-L-methionine</name>
        <dbReference type="ChEBI" id="CHEBI:59789"/>
    </ligand>
</feature>
<feature type="binding site" evidence="1">
    <location>
        <position position="257"/>
    </location>
    <ligand>
        <name>[4Fe-4S] cluster</name>
        <dbReference type="ChEBI" id="CHEBI:49883"/>
        <label>2</label>
        <note>4Fe-4S-substrate</note>
    </ligand>
</feature>
<feature type="binding site" evidence="1">
    <location>
        <position position="260"/>
    </location>
    <ligand>
        <name>[4Fe-4S] cluster</name>
        <dbReference type="ChEBI" id="CHEBI:49883"/>
        <label>2</label>
        <note>4Fe-4S-substrate</note>
    </ligand>
</feature>
<feature type="binding site" evidence="1">
    <location>
        <begin position="262"/>
        <end position="264"/>
    </location>
    <ligand>
        <name>GTP</name>
        <dbReference type="ChEBI" id="CHEBI:37565"/>
    </ligand>
</feature>
<feature type="binding site" evidence="1">
    <location>
        <position position="274"/>
    </location>
    <ligand>
        <name>[4Fe-4S] cluster</name>
        <dbReference type="ChEBI" id="CHEBI:49883"/>
        <label>2</label>
        <note>4Fe-4S-substrate</note>
    </ligand>
</feature>
<accession>A4XW05</accession>
<gene>
    <name evidence="1" type="primary">moaA</name>
    <name type="ordered locus">Pmen_2766</name>
</gene>
<sequence length="331" mass="37274">MHTNQLVDPFGRRITYLRLSVTDRCDFRCTYCMSEDMQFAPRQQILSLEELYAVADAFIGLGVRRIRITGGEPLVRKNLLSLLQRLGERDELDDLAITTNGSQLAEMAAPLRAAGVRRLNISLDSLQRERFAAFTRRDKLDQVLAGIDAARAAGFDRIKLNSVVQSGRNDDEVLDLVEFAVERGLDISFIEEMPLGSVVSHSREQTFCSSDEVRQRIEQRHALVRSSKVTGGPSRYWQVVGTQTQVGFISPHSHNFCGDCNRVRVTAEGKLVLCLGHDNALDLKRLLRAHPGDSERLRQALTEALRLKPERHHFATDEQVQVVRFMSMTGG</sequence>
<keyword id="KW-0004">4Fe-4S</keyword>
<keyword id="KW-0342">GTP-binding</keyword>
<keyword id="KW-0408">Iron</keyword>
<keyword id="KW-0411">Iron-sulfur</keyword>
<keyword id="KW-0456">Lyase</keyword>
<keyword id="KW-0479">Metal-binding</keyword>
<keyword id="KW-0501">Molybdenum cofactor biosynthesis</keyword>
<keyword id="KW-0547">Nucleotide-binding</keyword>
<keyword id="KW-0949">S-adenosyl-L-methionine</keyword>
<proteinExistence type="inferred from homology"/>
<reference key="1">
    <citation type="submission" date="2007-04" db="EMBL/GenBank/DDBJ databases">
        <title>Complete sequence of Pseudomonas mendocina ymp.</title>
        <authorList>
            <consortium name="US DOE Joint Genome Institute"/>
            <person name="Copeland A."/>
            <person name="Lucas S."/>
            <person name="Lapidus A."/>
            <person name="Barry K."/>
            <person name="Glavina del Rio T."/>
            <person name="Dalin E."/>
            <person name="Tice H."/>
            <person name="Pitluck S."/>
            <person name="Kiss H."/>
            <person name="Brettin T."/>
            <person name="Detter J.C."/>
            <person name="Bruce D."/>
            <person name="Han C."/>
            <person name="Schmutz J."/>
            <person name="Larimer F."/>
            <person name="Land M."/>
            <person name="Hauser L."/>
            <person name="Kyrpides N."/>
            <person name="Mikhailova N."/>
            <person name="Hersman L."/>
            <person name="Dubois J."/>
            <person name="Maurice P."/>
            <person name="Richardson P."/>
        </authorList>
    </citation>
    <scope>NUCLEOTIDE SEQUENCE [LARGE SCALE GENOMIC DNA]</scope>
    <source>
        <strain>ymp</strain>
    </source>
</reference>
<comment type="function">
    <text evidence="1">Catalyzes the cyclization of GTP to (8S)-3',8-cyclo-7,8-dihydroguanosine 5'-triphosphate.</text>
</comment>
<comment type="catalytic activity">
    <reaction evidence="1">
        <text>GTP + AH2 + S-adenosyl-L-methionine = (8S)-3',8-cyclo-7,8-dihydroguanosine 5'-triphosphate + 5'-deoxyadenosine + L-methionine + A + H(+)</text>
        <dbReference type="Rhea" id="RHEA:49576"/>
        <dbReference type="ChEBI" id="CHEBI:13193"/>
        <dbReference type="ChEBI" id="CHEBI:15378"/>
        <dbReference type="ChEBI" id="CHEBI:17319"/>
        <dbReference type="ChEBI" id="CHEBI:17499"/>
        <dbReference type="ChEBI" id="CHEBI:37565"/>
        <dbReference type="ChEBI" id="CHEBI:57844"/>
        <dbReference type="ChEBI" id="CHEBI:59789"/>
        <dbReference type="ChEBI" id="CHEBI:131766"/>
        <dbReference type="EC" id="4.1.99.22"/>
    </reaction>
</comment>
<comment type="cofactor">
    <cofactor evidence="1">
        <name>[4Fe-4S] cluster</name>
        <dbReference type="ChEBI" id="CHEBI:49883"/>
    </cofactor>
    <text evidence="1">Binds 2 [4Fe-4S] clusters. Binds 1 [4Fe-4S] cluster coordinated with 3 cysteines and an exchangeable S-adenosyl-L-methionine and 1 [4Fe-4S] cluster coordinated with 3 cysteines and the GTP-derived substrate.</text>
</comment>
<comment type="pathway">
    <text evidence="1">Cofactor biosynthesis; molybdopterin biosynthesis.</text>
</comment>
<comment type="subunit">
    <text evidence="1">Monomer and homodimer.</text>
</comment>
<comment type="similarity">
    <text evidence="1">Belongs to the radical SAM superfamily. MoaA family.</text>
</comment>